<protein>
    <recommendedName>
        <fullName evidence="1">Tautomerase PptA</fullName>
        <ecNumber evidence="1">5.3.2.-</ecNumber>
    </recommendedName>
</protein>
<proteinExistence type="inferred from homology"/>
<dbReference type="EC" id="5.3.2.-" evidence="1"/>
<dbReference type="EMBL" id="AP009240">
    <property type="protein sequence ID" value="BAG77074.1"/>
    <property type="molecule type" value="Genomic_DNA"/>
</dbReference>
<dbReference type="RefSeq" id="WP_001120141.1">
    <property type="nucleotide sequence ID" value="NC_011415.1"/>
</dbReference>
<dbReference type="SMR" id="B6IAL3"/>
<dbReference type="GeneID" id="75203165"/>
<dbReference type="KEGG" id="ecy:ECSE_1550"/>
<dbReference type="HOGENOM" id="CLU_183611_0_1_6"/>
<dbReference type="Proteomes" id="UP000008199">
    <property type="component" value="Chromosome"/>
</dbReference>
<dbReference type="GO" id="GO:0005737">
    <property type="term" value="C:cytoplasm"/>
    <property type="evidence" value="ECO:0007669"/>
    <property type="project" value="UniProtKB-SubCell"/>
</dbReference>
<dbReference type="GO" id="GO:0016862">
    <property type="term" value="F:intramolecular oxidoreductase activity, interconverting keto- and enol-groups"/>
    <property type="evidence" value="ECO:0007669"/>
    <property type="project" value="UniProtKB-UniRule"/>
</dbReference>
<dbReference type="Gene3D" id="3.30.429.10">
    <property type="entry name" value="Macrophage Migration Inhibitory Factor"/>
    <property type="match status" value="1"/>
</dbReference>
<dbReference type="HAMAP" id="MF_00718">
    <property type="entry name" value="Tautomerase_PptA"/>
    <property type="match status" value="1"/>
</dbReference>
<dbReference type="InterPro" id="IPR004370">
    <property type="entry name" value="4-OT-like_dom"/>
</dbReference>
<dbReference type="InterPro" id="IPR014347">
    <property type="entry name" value="Tautomerase/MIF_sf"/>
</dbReference>
<dbReference type="InterPro" id="IPR017284">
    <property type="entry name" value="Tautomerase_PptA"/>
</dbReference>
<dbReference type="NCBIfam" id="NF002324">
    <property type="entry name" value="PRK01271.1"/>
    <property type="match status" value="1"/>
</dbReference>
<dbReference type="Pfam" id="PF01361">
    <property type="entry name" value="Tautomerase"/>
    <property type="match status" value="1"/>
</dbReference>
<dbReference type="PIRSF" id="PIRSF037799">
    <property type="entry name" value="Tautomer_YdcE_prd"/>
    <property type="match status" value="1"/>
</dbReference>
<dbReference type="SUPFAM" id="SSF55331">
    <property type="entry name" value="Tautomerase/MIF"/>
    <property type="match status" value="1"/>
</dbReference>
<gene>
    <name evidence="1" type="primary">pptA</name>
    <name type="ordered locus">ECSE_1550</name>
</gene>
<name>PPTA_ECOSE</name>
<sequence length="75" mass="8488">MPHIDIKCFPRELDEQQKAALAADITDVIIRHLNSKDSSISIALQQIQPESWQAIWDAEIAPQMEALIKKPGYSM</sequence>
<keyword id="KW-0963">Cytoplasm</keyword>
<keyword id="KW-0413">Isomerase</keyword>
<feature type="initiator methionine" description="Removed" evidence="1">
    <location>
        <position position="1"/>
    </location>
</feature>
<feature type="chain" id="PRO_1000201578" description="Tautomerase PptA">
    <location>
        <begin position="2"/>
        <end position="75"/>
    </location>
</feature>
<feature type="active site" description="Proton acceptor; via imino nitrogen" evidence="1">
    <location>
        <position position="2"/>
    </location>
</feature>
<comment type="subunit">
    <text evidence="1">Homodimer.</text>
</comment>
<comment type="subcellular location">
    <subcellularLocation>
        <location evidence="1">Cytoplasm</location>
    </subcellularLocation>
</comment>
<comment type="similarity">
    <text evidence="1">Belongs to the 4-oxalocrotonate tautomerase family. PptA subfamily.</text>
</comment>
<evidence type="ECO:0000255" key="1">
    <source>
        <dbReference type="HAMAP-Rule" id="MF_00718"/>
    </source>
</evidence>
<accession>B6IAL3</accession>
<reference key="1">
    <citation type="journal article" date="2008" name="DNA Res.">
        <title>Complete genome sequence and comparative analysis of the wild-type commensal Escherichia coli strain SE11 isolated from a healthy adult.</title>
        <authorList>
            <person name="Oshima K."/>
            <person name="Toh H."/>
            <person name="Ogura Y."/>
            <person name="Sasamoto H."/>
            <person name="Morita H."/>
            <person name="Park S.-H."/>
            <person name="Ooka T."/>
            <person name="Iyoda S."/>
            <person name="Taylor T.D."/>
            <person name="Hayashi T."/>
            <person name="Itoh K."/>
            <person name="Hattori M."/>
        </authorList>
    </citation>
    <scope>NUCLEOTIDE SEQUENCE [LARGE SCALE GENOMIC DNA]</scope>
    <source>
        <strain>SE11</strain>
    </source>
</reference>
<organism>
    <name type="scientific">Escherichia coli (strain SE11)</name>
    <dbReference type="NCBI Taxonomy" id="409438"/>
    <lineage>
        <taxon>Bacteria</taxon>
        <taxon>Pseudomonadati</taxon>
        <taxon>Pseudomonadota</taxon>
        <taxon>Gammaproteobacteria</taxon>
        <taxon>Enterobacterales</taxon>
        <taxon>Enterobacteriaceae</taxon>
        <taxon>Escherichia</taxon>
    </lineage>
</organism>